<gene>
    <name type="primary">PTCH2</name>
    <name type="ORF">UNQ560/PRO1121/PRO57079</name>
</gene>
<name>PTC2_HUMAN</name>
<dbReference type="EMBL" id="AF091501">
    <property type="protein sequence ID" value="AAC79847.1"/>
    <property type="molecule type" value="mRNA"/>
</dbReference>
<dbReference type="EMBL" id="AF087651">
    <property type="protein sequence ID" value="AAD25953.1"/>
    <property type="molecule type" value="mRNA"/>
</dbReference>
<dbReference type="EMBL" id="AF119569">
    <property type="protein sequence ID" value="AAD17260.1"/>
    <property type="molecule type" value="mRNA"/>
</dbReference>
<dbReference type="EMBL" id="AY358555">
    <property type="protein sequence ID" value="AAQ88919.1"/>
    <property type="molecule type" value="mRNA"/>
</dbReference>
<dbReference type="EMBL" id="AY359016">
    <property type="protein sequence ID" value="AAQ89375.1"/>
    <property type="molecule type" value="mRNA"/>
</dbReference>
<dbReference type="EMBL" id="AY438664">
    <property type="protein sequence ID" value="AAR05447.1"/>
    <property type="molecule type" value="Genomic_DNA"/>
</dbReference>
<dbReference type="EMBL" id="AL136380">
    <property type="status" value="NOT_ANNOTATED_CDS"/>
    <property type="molecule type" value="Genomic_DNA"/>
</dbReference>
<dbReference type="EMBL" id="AL592166">
    <property type="status" value="NOT_ANNOTATED_CDS"/>
    <property type="molecule type" value="Genomic_DNA"/>
</dbReference>
<dbReference type="CCDS" id="CCDS516.1">
    <molecule id="Q9Y6C5-1"/>
</dbReference>
<dbReference type="CCDS" id="CCDS53312.1">
    <molecule id="Q9Y6C5-2"/>
</dbReference>
<dbReference type="RefSeq" id="NP_001159764.1">
    <molecule id="Q9Y6C5-2"/>
    <property type="nucleotide sequence ID" value="NM_001166292.2"/>
</dbReference>
<dbReference type="RefSeq" id="NP_003729.3">
    <molecule id="Q9Y6C5-1"/>
    <property type="nucleotide sequence ID" value="NM_003738.4"/>
</dbReference>
<dbReference type="SMR" id="Q9Y6C5"/>
<dbReference type="BioGRID" id="114195">
    <property type="interactions" value="18"/>
</dbReference>
<dbReference type="FunCoup" id="Q9Y6C5">
    <property type="interactions" value="518"/>
</dbReference>
<dbReference type="IntAct" id="Q9Y6C5">
    <property type="interactions" value="12"/>
</dbReference>
<dbReference type="STRING" id="9606.ENSP00000361266"/>
<dbReference type="TCDB" id="2.A.6.6.14">
    <property type="family name" value="the resistance-nodulation-cell division (rnd) superfamily"/>
</dbReference>
<dbReference type="GlyCosmos" id="Q9Y6C5">
    <property type="glycosylation" value="2 sites, No reported glycans"/>
</dbReference>
<dbReference type="GlyGen" id="Q9Y6C5">
    <property type="glycosylation" value="3 sites, 1 O-linked glycan (1 site)"/>
</dbReference>
<dbReference type="iPTMnet" id="Q9Y6C5"/>
<dbReference type="PhosphoSitePlus" id="Q9Y6C5"/>
<dbReference type="BioMuta" id="PTCH2"/>
<dbReference type="DMDM" id="12643356"/>
<dbReference type="MassIVE" id="Q9Y6C5"/>
<dbReference type="PaxDb" id="9606-ENSP00000361266"/>
<dbReference type="Antibodypedia" id="18516">
    <property type="antibodies" value="165 antibodies from 26 providers"/>
</dbReference>
<dbReference type="DNASU" id="8643"/>
<dbReference type="Ensembl" id="ENST00000372192.4">
    <molecule id="Q9Y6C5-1"/>
    <property type="protein sequence ID" value="ENSP00000361266.3"/>
    <property type="gene ID" value="ENSG00000117425.15"/>
</dbReference>
<dbReference type="Ensembl" id="ENST00000447098.7">
    <molecule id="Q9Y6C5-2"/>
    <property type="protein sequence ID" value="ENSP00000389703.2"/>
    <property type="gene ID" value="ENSG00000117425.15"/>
</dbReference>
<dbReference type="GeneID" id="8643"/>
<dbReference type="KEGG" id="hsa:8643"/>
<dbReference type="MANE-Select" id="ENST00000372192.4">
    <property type="protein sequence ID" value="ENSP00000361266.3"/>
    <property type="RefSeq nucleotide sequence ID" value="NM_003738.5"/>
    <property type="RefSeq protein sequence ID" value="NP_003729.3"/>
</dbReference>
<dbReference type="UCSC" id="uc010olf.3">
    <molecule id="Q9Y6C5-1"/>
    <property type="organism name" value="human"/>
</dbReference>
<dbReference type="AGR" id="HGNC:9586"/>
<dbReference type="CTD" id="8643"/>
<dbReference type="DisGeNET" id="8643"/>
<dbReference type="GeneCards" id="PTCH2"/>
<dbReference type="HGNC" id="HGNC:9586">
    <property type="gene designation" value="PTCH2"/>
</dbReference>
<dbReference type="HPA" id="ENSG00000117425">
    <property type="expression patterns" value="Tissue enhanced (parathyroid gland, salivary gland)"/>
</dbReference>
<dbReference type="MalaCards" id="PTCH2"/>
<dbReference type="MIM" id="109400">
    <property type="type" value="phenotype"/>
</dbReference>
<dbReference type="MIM" id="155255">
    <property type="type" value="phenotype"/>
</dbReference>
<dbReference type="MIM" id="603673">
    <property type="type" value="gene"/>
</dbReference>
<dbReference type="MIM" id="605462">
    <property type="type" value="phenotype"/>
</dbReference>
<dbReference type="neXtProt" id="NX_Q9Y6C5"/>
<dbReference type="OpenTargets" id="ENSG00000117425"/>
<dbReference type="Orphanet" id="377">
    <property type="disease" value="Gorlin syndrome"/>
</dbReference>
<dbReference type="Orphanet" id="141276">
    <property type="disease" value="Tessier number 7 facial cleft"/>
</dbReference>
<dbReference type="PharmGKB" id="PA33938"/>
<dbReference type="VEuPathDB" id="HostDB:ENSG00000117425"/>
<dbReference type="eggNOG" id="KOG1935">
    <property type="taxonomic scope" value="Eukaryota"/>
</dbReference>
<dbReference type="GeneTree" id="ENSGT00940000159901"/>
<dbReference type="HOGENOM" id="CLU_002506_0_0_1"/>
<dbReference type="InParanoid" id="Q9Y6C5"/>
<dbReference type="OMA" id="PINHHSF"/>
<dbReference type="OrthoDB" id="5873834at2759"/>
<dbReference type="PAN-GO" id="Q9Y6C5">
    <property type="GO annotations" value="5 GO annotations based on evolutionary models"/>
</dbReference>
<dbReference type="PhylomeDB" id="Q9Y6C5"/>
<dbReference type="TreeFam" id="TF106489"/>
<dbReference type="PathwayCommons" id="Q9Y6C5"/>
<dbReference type="Reactome" id="R-HSA-373080">
    <property type="pathway name" value="Class B/2 (Secretin family receptors)"/>
</dbReference>
<dbReference type="SignaLink" id="Q9Y6C5"/>
<dbReference type="SIGNOR" id="Q9Y6C5"/>
<dbReference type="BioGRID-ORCS" id="8643">
    <property type="hits" value="14 hits in 1150 CRISPR screens"/>
</dbReference>
<dbReference type="GenomeRNAi" id="8643"/>
<dbReference type="Pharos" id="Q9Y6C5">
    <property type="development level" value="Tbio"/>
</dbReference>
<dbReference type="PRO" id="PR:Q9Y6C5"/>
<dbReference type="Proteomes" id="UP000005640">
    <property type="component" value="Chromosome 1"/>
</dbReference>
<dbReference type="RNAct" id="Q9Y6C5">
    <property type="molecule type" value="protein"/>
</dbReference>
<dbReference type="Bgee" id="ENSG00000117425">
    <property type="expression patterns" value="Expressed in male germ line stem cell (sensu Vertebrata) in testis and 93 other cell types or tissues"/>
</dbReference>
<dbReference type="ExpressionAtlas" id="Q9Y6C5">
    <property type="expression patterns" value="baseline and differential"/>
</dbReference>
<dbReference type="GO" id="GO:0005886">
    <property type="term" value="C:plasma membrane"/>
    <property type="evidence" value="ECO:0000318"/>
    <property type="project" value="GO_Central"/>
</dbReference>
<dbReference type="GO" id="GO:0097108">
    <property type="term" value="F:hedgehog family protein binding"/>
    <property type="evidence" value="ECO:0000353"/>
    <property type="project" value="BHF-UCL"/>
</dbReference>
<dbReference type="GO" id="GO:0008158">
    <property type="term" value="F:hedgehog receptor activity"/>
    <property type="evidence" value="ECO:0000318"/>
    <property type="project" value="GO_Central"/>
</dbReference>
<dbReference type="GO" id="GO:0005119">
    <property type="term" value="F:smoothened binding"/>
    <property type="evidence" value="ECO:0000353"/>
    <property type="project" value="BHF-UCL"/>
</dbReference>
<dbReference type="GO" id="GO:0001709">
    <property type="term" value="P:cell fate determination"/>
    <property type="evidence" value="ECO:0007669"/>
    <property type="project" value="Ensembl"/>
</dbReference>
<dbReference type="GO" id="GO:0009957">
    <property type="term" value="P:epidermal cell fate specification"/>
    <property type="evidence" value="ECO:0007669"/>
    <property type="project" value="Ensembl"/>
</dbReference>
<dbReference type="GO" id="GO:0042633">
    <property type="term" value="P:hair cycle"/>
    <property type="evidence" value="ECO:0007669"/>
    <property type="project" value="Ensembl"/>
</dbReference>
<dbReference type="GO" id="GO:0045879">
    <property type="term" value="P:negative regulation of smoothened signaling pathway"/>
    <property type="evidence" value="ECO:0000318"/>
    <property type="project" value="GO_Central"/>
</dbReference>
<dbReference type="GO" id="GO:0045606">
    <property type="term" value="P:positive regulation of epidermal cell differentiation"/>
    <property type="evidence" value="ECO:0007669"/>
    <property type="project" value="Ensembl"/>
</dbReference>
<dbReference type="GO" id="GO:0001558">
    <property type="term" value="P:regulation of cell growth"/>
    <property type="evidence" value="ECO:0000315"/>
    <property type="project" value="UniProtKB"/>
</dbReference>
<dbReference type="GO" id="GO:0043588">
    <property type="term" value="P:skin development"/>
    <property type="evidence" value="ECO:0007669"/>
    <property type="project" value="Ensembl"/>
</dbReference>
<dbReference type="FunFam" id="1.20.1640.10:FF:000007">
    <property type="entry name" value="Protein patched homolog 1"/>
    <property type="match status" value="1"/>
</dbReference>
<dbReference type="FunFam" id="1.20.1640.10:FF:000003">
    <property type="entry name" value="protein patched homolog 1"/>
    <property type="match status" value="1"/>
</dbReference>
<dbReference type="Gene3D" id="1.20.1640.10">
    <property type="entry name" value="Multidrug efflux transporter AcrB transmembrane domain"/>
    <property type="match status" value="2"/>
</dbReference>
<dbReference type="InterPro" id="IPR053958">
    <property type="entry name" value="HMGCR/SNAP/NPC1-like_SSD"/>
</dbReference>
<dbReference type="InterPro" id="IPR000731">
    <property type="entry name" value="SSD"/>
</dbReference>
<dbReference type="InterPro" id="IPR004766">
    <property type="entry name" value="TM_rcpt_patched"/>
</dbReference>
<dbReference type="NCBIfam" id="TIGR00918">
    <property type="entry name" value="2A060602"/>
    <property type="match status" value="1"/>
</dbReference>
<dbReference type="PANTHER" id="PTHR46022">
    <property type="entry name" value="PROTEIN PATCHED"/>
    <property type="match status" value="1"/>
</dbReference>
<dbReference type="PANTHER" id="PTHR46022:SF3">
    <property type="entry name" value="PROTEIN PATCHED HOMOLOG 2"/>
    <property type="match status" value="1"/>
</dbReference>
<dbReference type="Pfam" id="PF12349">
    <property type="entry name" value="Sterol-sensing"/>
    <property type="match status" value="1"/>
</dbReference>
<dbReference type="SUPFAM" id="SSF82866">
    <property type="entry name" value="Multidrug efflux transporter AcrB transmembrane domain"/>
    <property type="match status" value="2"/>
</dbReference>
<dbReference type="PROSITE" id="PS50156">
    <property type="entry name" value="SSD"/>
    <property type="match status" value="1"/>
</dbReference>
<feature type="chain" id="PRO_0000205970" description="Protein patched homolog 2">
    <location>
        <begin position="1"/>
        <end position="1203"/>
    </location>
</feature>
<feature type="topological domain" description="Cytoplasmic" evidence="1">
    <location>
        <begin position="1"/>
        <end position="57"/>
    </location>
</feature>
<feature type="transmembrane region" description="Helical" evidence="1">
    <location>
        <begin position="58"/>
        <end position="78"/>
    </location>
</feature>
<feature type="topological domain" description="Extracellular" evidence="1">
    <location>
        <begin position="79"/>
        <end position="392"/>
    </location>
</feature>
<feature type="transmembrane region" description="Helical" evidence="1">
    <location>
        <begin position="393"/>
        <end position="413"/>
    </location>
</feature>
<feature type="topological domain" description="Cytoplasmic" evidence="1">
    <location>
        <begin position="414"/>
        <end position="428"/>
    </location>
</feature>
<feature type="transmembrane region" description="Helical" evidence="1">
    <location>
        <begin position="429"/>
        <end position="449"/>
    </location>
</feature>
<feature type="topological domain" description="Extracellular" evidence="1">
    <location>
        <begin position="450"/>
        <end position="457"/>
    </location>
</feature>
<feature type="transmembrane region" description="Helical" evidence="1">
    <location>
        <begin position="458"/>
        <end position="478"/>
    </location>
</feature>
<feature type="topological domain" description="Cytoplasmic" evidence="1">
    <location>
        <begin position="479"/>
        <end position="501"/>
    </location>
</feature>
<feature type="transmembrane region" description="Helical" evidence="1">
    <location>
        <begin position="502"/>
        <end position="522"/>
    </location>
</feature>
<feature type="topological domain" description="Extracellular" evidence="1">
    <location>
        <begin position="523"/>
        <end position="531"/>
    </location>
</feature>
<feature type="transmembrane region" description="Helical" evidence="1">
    <location>
        <begin position="532"/>
        <end position="552"/>
    </location>
</feature>
<feature type="topological domain" description="Cytoplasmic" evidence="1">
    <location>
        <begin position="553"/>
        <end position="686"/>
    </location>
</feature>
<feature type="transmembrane region" description="Helical" evidence="1">
    <location>
        <begin position="687"/>
        <end position="707"/>
    </location>
</feature>
<feature type="topological domain" description="Extracellular" evidence="1">
    <location>
        <begin position="708"/>
        <end position="963"/>
    </location>
</feature>
<feature type="transmembrane region" description="Helical" evidence="1">
    <location>
        <begin position="964"/>
        <end position="984"/>
    </location>
</feature>
<feature type="topological domain" description="Cytoplasmic" evidence="1">
    <location>
        <begin position="985"/>
        <end position="991"/>
    </location>
</feature>
<feature type="transmembrane region" description="Helical" evidence="1">
    <location>
        <begin position="992"/>
        <end position="1012"/>
    </location>
</feature>
<feature type="topological domain" description="Extracellular" evidence="1">
    <location>
        <position position="1013"/>
    </location>
</feature>
<feature type="transmembrane region" description="Helical" evidence="1">
    <location>
        <begin position="1014"/>
        <end position="1034"/>
    </location>
</feature>
<feature type="topological domain" description="Cytoplasmic" evidence="1">
    <location>
        <begin position="1035"/>
        <end position="1064"/>
    </location>
</feature>
<feature type="transmembrane region" description="Helical" evidence="1">
    <location>
        <begin position="1065"/>
        <end position="1085"/>
    </location>
</feature>
<feature type="topological domain" description="Extracellular" evidence="1">
    <location>
        <begin position="1086"/>
        <end position="1093"/>
    </location>
</feature>
<feature type="transmembrane region" description="Helical" evidence="1">
    <location>
        <begin position="1094"/>
        <end position="1114"/>
    </location>
</feature>
<feature type="topological domain" description="Cytoplasmic" evidence="1">
    <location>
        <begin position="1115"/>
        <end position="1203"/>
    </location>
</feature>
<feature type="domain" description="SSD" evidence="2">
    <location>
        <begin position="394"/>
        <end position="552"/>
    </location>
</feature>
<feature type="region of interest" description="Disordered" evidence="3">
    <location>
        <begin position="1171"/>
        <end position="1203"/>
    </location>
</feature>
<feature type="compositionally biased region" description="Polar residues" evidence="3">
    <location>
        <begin position="1186"/>
        <end position="1195"/>
    </location>
</feature>
<feature type="glycosylation site" description="N-linked (GlcNAc...) asparagine" evidence="1">
    <location>
        <position position="370"/>
    </location>
</feature>
<feature type="glycosylation site" description="N-linked (GlcNAc...) asparagine" evidence="1">
    <location>
        <position position="812"/>
    </location>
</feature>
<feature type="splice variant" id="VSP_004542" description="In isoform 2." evidence="7">
    <original>WGASSSLPQSFARVTTSMTVAIHPPPLPGAYIHPAPDEPPWSPAATSSGNLSSRGPGPATG</original>
    <variation>PEEI</variation>
    <location>
        <begin position="1143"/>
        <end position="1203"/>
    </location>
</feature>
<feature type="sequence variant" id="VAR_018935" description="In dbSNP:rs11573578." evidence="6">
    <original>E</original>
    <variation>Q</variation>
    <location>
        <position position="346"/>
    </location>
</feature>
<feature type="sequence variant" id="VAR_018936" description="In dbSNP:rs11573581." evidence="6">
    <original>E</original>
    <variation>K</variation>
    <location>
        <position position="493"/>
    </location>
</feature>
<feature type="sequence variant" id="VAR_018937" description="In dbSNP:rs11573586." evidence="6">
    <original>H</original>
    <variation>Y</variation>
    <location>
        <position position="622"/>
    </location>
</feature>
<feature type="sequence variant" id="VAR_081391" description="Found in a family with nevoid basal cell carcinoma syndrome; uncertain significance; does not inhibit cell growth when overexpressed in vitro; dbSNP:rs121434397." evidence="4">
    <original>R</original>
    <variation>Q</variation>
    <location>
        <position position="719"/>
    </location>
</feature>
<feature type="sequence variant" id="VAR_018938" description="In dbSNP:rs11573590." evidence="6">
    <original>T</original>
    <variation>M</variation>
    <location>
        <position position="988"/>
    </location>
</feature>
<feature type="sequence variant" id="VAR_050466" description="In dbSNP:rs11573591.">
    <original>V</original>
    <variation>M</variation>
    <location>
        <position position="995"/>
    </location>
</feature>
<feature type="sequence variant" id="VAR_018939" description="In dbSNP:rs11573591." evidence="6">
    <original>V</original>
    <variation>M</variation>
    <location>
        <position position="1019"/>
    </location>
</feature>
<feature type="sequence variant" id="VAR_018940" description="In dbSNP:rs11573598." evidence="6">
    <original>I</original>
    <variation>M</variation>
    <location>
        <position position="1121"/>
    </location>
</feature>
<feature type="sequence conflict" description="In Ref. 2; AAD25953." evidence="8" ref="2">
    <original>T</original>
    <variation>N</variation>
    <location>
        <position position="2"/>
    </location>
</feature>
<feature type="sequence conflict" description="In Ref. 2; AAD25953." evidence="8" ref="2">
    <original>R</original>
    <variation>L</variation>
    <location>
        <position position="120"/>
    </location>
</feature>
<feature type="sequence conflict" description="In Ref. 1; AAC79847 and 4; AAQ88919/AAQ89375." evidence="8" ref="1 4">
    <original>R</original>
    <variation>W</variation>
    <location>
        <position position="175"/>
    </location>
</feature>
<feature type="sequence conflict" description="In Ref. 2; AAD25953." evidence="8" ref="2">
    <original>Q</original>
    <variation>R</variation>
    <location>
        <position position="753"/>
    </location>
</feature>
<feature type="sequence conflict" description="In Ref. 2; AAD25953." evidence="8" ref="2">
    <original>N</original>
    <variation>S</variation>
    <location>
        <position position="787"/>
    </location>
</feature>
<feature type="sequence conflict" description="In Ref. 3; AAD17260." evidence="8" ref="3">
    <original>P</original>
    <variation>L</variation>
    <location>
        <position position="833"/>
    </location>
</feature>
<feature type="sequence conflict" description="In Ref. 2; AAD25953." evidence="8" ref="2">
    <original>S</original>
    <variation>G</variation>
    <location>
        <position position="837"/>
    </location>
</feature>
<feature type="sequence conflict" description="In Ref. 2; AAD25953." evidence="8" ref="2">
    <original>D</original>
    <variation>E</variation>
    <location>
        <position position="846"/>
    </location>
</feature>
<feature type="sequence conflict" description="In Ref. 3; AAD17260." evidence="8" ref="3">
    <original>L</original>
    <variation>F</variation>
    <location>
        <position position="897"/>
    </location>
</feature>
<feature type="sequence conflict" description="In Ref. 4; AAQ88919." evidence="8" ref="4">
    <original>G</original>
    <variation>GDYKDDDDK</variation>
    <location>
        <position position="1203"/>
    </location>
</feature>
<organism>
    <name type="scientific">Homo sapiens</name>
    <name type="common">Human</name>
    <dbReference type="NCBI Taxonomy" id="9606"/>
    <lineage>
        <taxon>Eukaryota</taxon>
        <taxon>Metazoa</taxon>
        <taxon>Chordata</taxon>
        <taxon>Craniata</taxon>
        <taxon>Vertebrata</taxon>
        <taxon>Euteleostomi</taxon>
        <taxon>Mammalia</taxon>
        <taxon>Eutheria</taxon>
        <taxon>Euarchontoglires</taxon>
        <taxon>Primates</taxon>
        <taxon>Haplorrhini</taxon>
        <taxon>Catarrhini</taxon>
        <taxon>Hominidae</taxon>
        <taxon>Homo</taxon>
    </lineage>
</organism>
<sequence length="1203" mass="130544">MTRSPPLRELPPSYTPPARTAAPQILAGSLKAPLWLRAYFQGLLFSLGCGIQRHCGKVLFLGLLAFGALALGLRMAIIETNLEQLWVEVGSRVSQELHYTKEKLGEEAAYTSQMLIQTARQEGENILTPEALGLHLQAALTASKVQVSLYGKSWDLNKICYKSGVPLIENGMIERMIEKLFPCVILTPLDCFWEGAKLQGGSAYLPGRPDIQWTNLDPEQLLEELGPFASLEGFRELLDKAQVGQAYVGRPCLHPDDLHCPPSAPNHHSRQAPNVAHELSGGCHGFSHKFMHWQEELLLGGMARDPQGELLRAEALQSTFLLMSPRQLYEHFRGDYQTHDIGWSEEQASTVLQAWQRRFVQLAQEALPENASQQIHAFSSTTLDDILHAFSEVSAARVVGGYLLMLAYACVTMLRWDCAQSQGSVGLAGVLLVALAVASGLGLCALLGITFNAATTQVLPFLALGIGVDDVFLLAHAFTEALPGTPLQERMGECLQRTGTSVVLTSINNMAAFLMAALVPIPALRAFSLQAAIVVGCTFVAVMLVFPAILSLDLRRRHCQRLDVLCCFSSPCSAQVIQILPQELGDGTVPVGIAHLTATVQAFTHCEASSQHVVTILPPQAHLVPPPSDPLGSELFSPGGSTRDLLGQEEETRQKAACKSLPCARWNLAHFARYQFAPLLLQSHAKAIVLVLFGALLGLSLYGATLVQDGLALTDVVPRGTKEHAFLSAQLRYFSLYEVALVTQGGFDYAHSQRALFDLHQRFSSLKAVLPPPATQAPRTWLHYYRNWLQGIQAAFDQDWASGRITRHSYRNGSEDGALAYKLLIQTGDAQEPLDFSQLTTRKLVDREGLIPPELFYMGLTVWVSSDPLGLAASQANFYPPPPEWLHDKYDTTGENLRIPPAQPLEFAQFPFLLRGLQKTADFVEAIEGARAACAEAGQAGVHAYPSGSPFLFWEQYLGLRRCFLLAVCILLVCTFLVCALLLLNPWTAGLIVLVLAMMTVELFGIMGFLGIKLSAIPVVILVASVGIGVEFTVHVALGFLTTQGSRNLRAAHALEHTFAPVTDGAISTLLGLLMLAGSHFDFIVRYFFAALTVLTLLGLLHGLVLLPVLLSILGPPPEVIQMYKESPEILSPPAPQGGGLRWGASSSLPQSFARVTTSMTVAIHPPPLPGAYIHPAPDEPPWSPAATSSGNLSSRGPGPATG</sequence>
<protein>
    <recommendedName>
        <fullName>Protein patched homolog 2</fullName>
        <shortName>PTC2</shortName>
    </recommendedName>
</protein>
<reference key="1">
    <citation type="journal article" date="1998" name="Proc. Natl. Acad. Sci. U.S.A.">
        <title>Characterization of two patched receptors for the vertebrate hedgehog protein family.</title>
        <authorList>
            <person name="Carpenter D."/>
            <person name="Stone D.M."/>
            <person name="Brush J."/>
            <person name="Ryan A."/>
            <person name="Armanini M."/>
            <person name="Frantz G."/>
            <person name="Rosenthal A."/>
            <person name="de Sauvage F.J."/>
        </authorList>
    </citation>
    <scope>NUCLEOTIDE SEQUENCE [MRNA] (ISOFORM 1)</scope>
</reference>
<reference key="2">
    <citation type="journal article" date="1999" name="Hum. Mol. Genet.">
        <title>Isolation and characterization of human patched 2 (PTCH2), a putative tumour suppressor gene in basal cell carcinoma and medulloblastoma on chromosome 1p32.</title>
        <authorList>
            <person name="Smyth I."/>
            <person name="Narang M.A."/>
            <person name="Evans T."/>
            <person name="Heimann C."/>
            <person name="Nakamura Y."/>
            <person name="Chenevix-Trench G."/>
            <person name="Pietsch T."/>
            <person name="Wicking C."/>
            <person name="Wainwright B.J."/>
        </authorList>
    </citation>
    <scope>NUCLEOTIDE SEQUENCE [MRNA] (ISOFORM 1)</scope>
    <scope>INVOLVEMENT IN MDB AND BCC</scope>
</reference>
<reference key="3">
    <citation type="journal article" date="1999" name="Cancer Res.">
        <title>PTCH2, a novel human patched gene, undergoing alternative splicing and up-regulated in basal cell carcinomas.</title>
        <authorList>
            <person name="Zaphiropoulos P.G."/>
            <person name="Unden A.B."/>
            <person name="Rahnama F."/>
            <person name="Hollingsworth R.E."/>
            <person name="Toftgard R."/>
        </authorList>
    </citation>
    <scope>NUCLEOTIDE SEQUENCE [MRNA] (ISOFORM 2)</scope>
</reference>
<reference key="4">
    <citation type="journal article" date="2003" name="Genome Res.">
        <title>The secreted protein discovery initiative (SPDI), a large-scale effort to identify novel human secreted and transmembrane proteins: a bioinformatics assessment.</title>
        <authorList>
            <person name="Clark H.F."/>
            <person name="Gurney A.L."/>
            <person name="Abaya E."/>
            <person name="Baker K."/>
            <person name="Baldwin D.T."/>
            <person name="Brush J."/>
            <person name="Chen J."/>
            <person name="Chow B."/>
            <person name="Chui C."/>
            <person name="Crowley C."/>
            <person name="Currell B."/>
            <person name="Deuel B."/>
            <person name="Dowd P."/>
            <person name="Eaton D."/>
            <person name="Foster J.S."/>
            <person name="Grimaldi C."/>
            <person name="Gu Q."/>
            <person name="Hass P.E."/>
            <person name="Heldens S."/>
            <person name="Huang A."/>
            <person name="Kim H.S."/>
            <person name="Klimowski L."/>
            <person name="Jin Y."/>
            <person name="Johnson S."/>
            <person name="Lee J."/>
            <person name="Lewis L."/>
            <person name="Liao D."/>
            <person name="Mark M.R."/>
            <person name="Robbie E."/>
            <person name="Sanchez C."/>
            <person name="Schoenfeld J."/>
            <person name="Seshagiri S."/>
            <person name="Simmons L."/>
            <person name="Singh J."/>
            <person name="Smith V."/>
            <person name="Stinson J."/>
            <person name="Vagts A."/>
            <person name="Vandlen R.L."/>
            <person name="Watanabe C."/>
            <person name="Wieand D."/>
            <person name="Woods K."/>
            <person name="Xie M.-H."/>
            <person name="Yansura D.G."/>
            <person name="Yi S."/>
            <person name="Yu G."/>
            <person name="Yuan J."/>
            <person name="Zhang M."/>
            <person name="Zhang Z."/>
            <person name="Goddard A.D."/>
            <person name="Wood W.I."/>
            <person name="Godowski P.J."/>
            <person name="Gray A.M."/>
        </authorList>
    </citation>
    <scope>NUCLEOTIDE SEQUENCE [LARGE SCALE MRNA] (ISOFORM 1)</scope>
</reference>
<reference key="5">
    <citation type="submission" date="2003-10" db="EMBL/GenBank/DDBJ databases">
        <authorList>
            <consortium name="NIEHS SNPs program"/>
        </authorList>
    </citation>
    <scope>NUCLEOTIDE SEQUENCE [GENOMIC DNA]</scope>
    <scope>VARIANTS GLN-346; LYS-493; TYR-622; MET-988; MET-1019 AND MET-1121</scope>
</reference>
<reference key="6">
    <citation type="journal article" date="2006" name="Nature">
        <title>The DNA sequence and biological annotation of human chromosome 1.</title>
        <authorList>
            <person name="Gregory S.G."/>
            <person name="Barlow K.F."/>
            <person name="McLay K.E."/>
            <person name="Kaul R."/>
            <person name="Swarbreck D."/>
            <person name="Dunham A."/>
            <person name="Scott C.E."/>
            <person name="Howe K.L."/>
            <person name="Woodfine K."/>
            <person name="Spencer C.C.A."/>
            <person name="Jones M.C."/>
            <person name="Gillson C."/>
            <person name="Searle S."/>
            <person name="Zhou Y."/>
            <person name="Kokocinski F."/>
            <person name="McDonald L."/>
            <person name="Evans R."/>
            <person name="Phillips K."/>
            <person name="Atkinson A."/>
            <person name="Cooper R."/>
            <person name="Jones C."/>
            <person name="Hall R.E."/>
            <person name="Andrews T.D."/>
            <person name="Lloyd C."/>
            <person name="Ainscough R."/>
            <person name="Almeida J.P."/>
            <person name="Ambrose K.D."/>
            <person name="Anderson F."/>
            <person name="Andrew R.W."/>
            <person name="Ashwell R.I.S."/>
            <person name="Aubin K."/>
            <person name="Babbage A.K."/>
            <person name="Bagguley C.L."/>
            <person name="Bailey J."/>
            <person name="Beasley H."/>
            <person name="Bethel G."/>
            <person name="Bird C.P."/>
            <person name="Bray-Allen S."/>
            <person name="Brown J.Y."/>
            <person name="Brown A.J."/>
            <person name="Buckley D."/>
            <person name="Burton J."/>
            <person name="Bye J."/>
            <person name="Carder C."/>
            <person name="Chapman J.C."/>
            <person name="Clark S.Y."/>
            <person name="Clarke G."/>
            <person name="Clee C."/>
            <person name="Cobley V."/>
            <person name="Collier R.E."/>
            <person name="Corby N."/>
            <person name="Coville G.J."/>
            <person name="Davies J."/>
            <person name="Deadman R."/>
            <person name="Dunn M."/>
            <person name="Earthrowl M."/>
            <person name="Ellington A.G."/>
            <person name="Errington H."/>
            <person name="Frankish A."/>
            <person name="Frankland J."/>
            <person name="French L."/>
            <person name="Garner P."/>
            <person name="Garnett J."/>
            <person name="Gay L."/>
            <person name="Ghori M.R.J."/>
            <person name="Gibson R."/>
            <person name="Gilby L.M."/>
            <person name="Gillett W."/>
            <person name="Glithero R.J."/>
            <person name="Grafham D.V."/>
            <person name="Griffiths C."/>
            <person name="Griffiths-Jones S."/>
            <person name="Grocock R."/>
            <person name="Hammond S."/>
            <person name="Harrison E.S.I."/>
            <person name="Hart E."/>
            <person name="Haugen E."/>
            <person name="Heath P.D."/>
            <person name="Holmes S."/>
            <person name="Holt K."/>
            <person name="Howden P.J."/>
            <person name="Hunt A.R."/>
            <person name="Hunt S.E."/>
            <person name="Hunter G."/>
            <person name="Isherwood J."/>
            <person name="James R."/>
            <person name="Johnson C."/>
            <person name="Johnson D."/>
            <person name="Joy A."/>
            <person name="Kay M."/>
            <person name="Kershaw J.K."/>
            <person name="Kibukawa M."/>
            <person name="Kimberley A.M."/>
            <person name="King A."/>
            <person name="Knights A.J."/>
            <person name="Lad H."/>
            <person name="Laird G."/>
            <person name="Lawlor S."/>
            <person name="Leongamornlert D.A."/>
            <person name="Lloyd D.M."/>
            <person name="Loveland J."/>
            <person name="Lovell J."/>
            <person name="Lush M.J."/>
            <person name="Lyne R."/>
            <person name="Martin S."/>
            <person name="Mashreghi-Mohammadi M."/>
            <person name="Matthews L."/>
            <person name="Matthews N.S.W."/>
            <person name="McLaren S."/>
            <person name="Milne S."/>
            <person name="Mistry S."/>
            <person name="Moore M.J.F."/>
            <person name="Nickerson T."/>
            <person name="O'Dell C.N."/>
            <person name="Oliver K."/>
            <person name="Palmeiri A."/>
            <person name="Palmer S.A."/>
            <person name="Parker A."/>
            <person name="Patel D."/>
            <person name="Pearce A.V."/>
            <person name="Peck A.I."/>
            <person name="Pelan S."/>
            <person name="Phelps K."/>
            <person name="Phillimore B.J."/>
            <person name="Plumb R."/>
            <person name="Rajan J."/>
            <person name="Raymond C."/>
            <person name="Rouse G."/>
            <person name="Saenphimmachak C."/>
            <person name="Sehra H.K."/>
            <person name="Sheridan E."/>
            <person name="Shownkeen R."/>
            <person name="Sims S."/>
            <person name="Skuce C.D."/>
            <person name="Smith M."/>
            <person name="Steward C."/>
            <person name="Subramanian S."/>
            <person name="Sycamore N."/>
            <person name="Tracey A."/>
            <person name="Tromans A."/>
            <person name="Van Helmond Z."/>
            <person name="Wall M."/>
            <person name="Wallis J.M."/>
            <person name="White S."/>
            <person name="Whitehead S.L."/>
            <person name="Wilkinson J.E."/>
            <person name="Willey D.L."/>
            <person name="Williams H."/>
            <person name="Wilming L."/>
            <person name="Wray P.W."/>
            <person name="Wu Z."/>
            <person name="Coulson A."/>
            <person name="Vaudin M."/>
            <person name="Sulston J.E."/>
            <person name="Durbin R.M."/>
            <person name="Hubbard T."/>
            <person name="Wooster R."/>
            <person name="Dunham I."/>
            <person name="Carter N.P."/>
            <person name="McVean G."/>
            <person name="Ross M.T."/>
            <person name="Harrow J."/>
            <person name="Olson M.V."/>
            <person name="Beck S."/>
            <person name="Rogers J."/>
            <person name="Bentley D.R."/>
        </authorList>
    </citation>
    <scope>NUCLEOTIDE SEQUENCE [LARGE SCALE GENOMIC DNA]</scope>
</reference>
<reference key="7">
    <citation type="journal article" date="2008" name="J. Med. Genet.">
        <title>A missense mutation in PTCH2 underlies dominantly inherited NBCCS in a Chinese family.</title>
        <authorList>
            <person name="Fan Z."/>
            <person name="Li J."/>
            <person name="Du J."/>
            <person name="Zhang H."/>
            <person name="Shen Y."/>
            <person name="Wang C.Y."/>
            <person name="Wang S."/>
        </authorList>
    </citation>
    <scope>FUNCTION</scope>
    <scope>VARIANT GLN-719</scope>
    <scope>CHARACTERIZATION OF VARIANT GLN-719</scope>
</reference>
<proteinExistence type="evidence at protein level"/>
<accession>Q9Y6C5</accession>
<accession>O95341</accession>
<accession>O95856</accession>
<accession>Q53Z57</accession>
<accession>Q5QP87</accession>
<accession>Q6UX14</accession>
<comment type="function">
    <text evidence="4">Plays a role in the control of cellular growth (PubMed:18285427). May have a role in epidermal development. May act as a receptor for Sonic hedgehog (SHH).</text>
</comment>
<comment type="subcellular location">
    <subcellularLocation>
        <location>Membrane</location>
        <topology>Multi-pass membrane protein</topology>
    </subcellularLocation>
</comment>
<comment type="alternative products">
    <event type="alternative splicing"/>
    <isoform>
        <id>Q9Y6C5-1</id>
        <name>1</name>
        <sequence type="displayed"/>
    </isoform>
    <isoform>
        <id>Q9Y6C5-2</id>
        <name>2</name>
        <sequence type="described" ref="VSP_004542"/>
    </isoform>
</comment>
<comment type="disease" evidence="5">
    <disease id="DI-01958">
        <name>Medulloblastoma</name>
        <acronym>MDB</acronym>
        <description>Malignant, invasive embryonal tumor of the cerebellum with a preferential manifestation in children.</description>
        <dbReference type="MIM" id="155255"/>
    </disease>
    <text>Disease susceptibility may be associated with variants affecting the gene represented in this entry.</text>
</comment>
<comment type="disease" evidence="5">
    <disease id="DI-02338">
        <name>Basal cell carcinoma</name>
        <acronym>BCC</acronym>
        <description>A common malignant skin neoplasm that typically appears on hair-bearing skin, most commonly on sun-exposed areas. BCC is slow growing and rarely metastasizes, but has potentialities for local invasion and destruction. It usually develops as a flat, firm, pale area that is small, raised, pink or red, translucent, shiny, and waxy, and the area may bleed following minor injury. Tumor size can vary from a few millimeters to several centimeters in diameter.</description>
        <dbReference type="MIM" id="605462"/>
    </disease>
    <text>Disease susceptibility may be associated with variants affecting the gene represented in this entry.</text>
</comment>
<comment type="similarity">
    <text evidence="8">Belongs to the patched family.</text>
</comment>
<comment type="online information" name="Atlas of Genetics and Cytogenetics in Oncology and Haematology">
    <link uri="https://atlasgeneticsoncology.org/gene/41892/PTCH2"/>
</comment>
<keyword id="KW-0025">Alternative splicing</keyword>
<keyword id="KW-0225">Disease variant</keyword>
<keyword id="KW-0325">Glycoprotein</keyword>
<keyword id="KW-0472">Membrane</keyword>
<keyword id="KW-0675">Receptor</keyword>
<keyword id="KW-1185">Reference proteome</keyword>
<keyword id="KW-0812">Transmembrane</keyword>
<keyword id="KW-1133">Transmembrane helix</keyword>
<evidence type="ECO:0000255" key="1"/>
<evidence type="ECO:0000255" key="2">
    <source>
        <dbReference type="PROSITE-ProRule" id="PRU00199"/>
    </source>
</evidence>
<evidence type="ECO:0000256" key="3">
    <source>
        <dbReference type="SAM" id="MobiDB-lite"/>
    </source>
</evidence>
<evidence type="ECO:0000269" key="4">
    <source>
    </source>
</evidence>
<evidence type="ECO:0000269" key="5">
    <source>
    </source>
</evidence>
<evidence type="ECO:0000269" key="6">
    <source ref="5"/>
</evidence>
<evidence type="ECO:0000303" key="7">
    <source>
    </source>
</evidence>
<evidence type="ECO:0000305" key="8"/>